<comment type="caution">
    <text evidence="1">Product of a dubious gene prediction.</text>
</comment>
<name>Y5069_DICDI</name>
<organism>
    <name type="scientific">Dictyostelium discoideum</name>
    <name type="common">Social amoeba</name>
    <dbReference type="NCBI Taxonomy" id="44689"/>
    <lineage>
        <taxon>Eukaryota</taxon>
        <taxon>Amoebozoa</taxon>
        <taxon>Evosea</taxon>
        <taxon>Eumycetozoa</taxon>
        <taxon>Dictyostelia</taxon>
        <taxon>Dictyosteliales</taxon>
        <taxon>Dictyosteliaceae</taxon>
        <taxon>Dictyostelium</taxon>
    </lineage>
</organism>
<accession>Q54AX0</accession>
<keyword id="KW-1185">Reference proteome</keyword>
<sequence length="12" mass="1361">MTPHDEEVDSSD</sequence>
<reference key="1">
    <citation type="journal article" date="2005" name="Nature">
        <title>The genome of the social amoeba Dictyostelium discoideum.</title>
        <authorList>
            <person name="Eichinger L."/>
            <person name="Pachebat J.A."/>
            <person name="Gloeckner G."/>
            <person name="Rajandream M.A."/>
            <person name="Sucgang R."/>
            <person name="Berriman M."/>
            <person name="Song J."/>
            <person name="Olsen R."/>
            <person name="Szafranski K."/>
            <person name="Xu Q."/>
            <person name="Tunggal B."/>
            <person name="Kummerfeld S."/>
            <person name="Madera M."/>
            <person name="Konfortov B.A."/>
            <person name="Rivero F."/>
            <person name="Bankier A.T."/>
            <person name="Lehmann R."/>
            <person name="Hamlin N."/>
            <person name="Davies R."/>
            <person name="Gaudet P."/>
            <person name="Fey P."/>
            <person name="Pilcher K."/>
            <person name="Chen G."/>
            <person name="Saunders D."/>
            <person name="Sodergren E.J."/>
            <person name="Davis P."/>
            <person name="Kerhornou A."/>
            <person name="Nie X."/>
            <person name="Hall N."/>
            <person name="Anjard C."/>
            <person name="Hemphill L."/>
            <person name="Bason N."/>
            <person name="Farbrother P."/>
            <person name="Desany B."/>
            <person name="Just E."/>
            <person name="Morio T."/>
            <person name="Rost R."/>
            <person name="Churcher C.M."/>
            <person name="Cooper J."/>
            <person name="Haydock S."/>
            <person name="van Driessche N."/>
            <person name="Cronin A."/>
            <person name="Goodhead I."/>
            <person name="Muzny D.M."/>
            <person name="Mourier T."/>
            <person name="Pain A."/>
            <person name="Lu M."/>
            <person name="Harper D."/>
            <person name="Lindsay R."/>
            <person name="Hauser H."/>
            <person name="James K.D."/>
            <person name="Quiles M."/>
            <person name="Madan Babu M."/>
            <person name="Saito T."/>
            <person name="Buchrieser C."/>
            <person name="Wardroper A."/>
            <person name="Felder M."/>
            <person name="Thangavelu M."/>
            <person name="Johnson D."/>
            <person name="Knights A."/>
            <person name="Loulseged H."/>
            <person name="Mungall K.L."/>
            <person name="Oliver K."/>
            <person name="Price C."/>
            <person name="Quail M.A."/>
            <person name="Urushihara H."/>
            <person name="Hernandez J."/>
            <person name="Rabbinowitsch E."/>
            <person name="Steffen D."/>
            <person name="Sanders M."/>
            <person name="Ma J."/>
            <person name="Kohara Y."/>
            <person name="Sharp S."/>
            <person name="Simmonds M.N."/>
            <person name="Spiegler S."/>
            <person name="Tivey A."/>
            <person name="Sugano S."/>
            <person name="White B."/>
            <person name="Walker D."/>
            <person name="Woodward J.R."/>
            <person name="Winckler T."/>
            <person name="Tanaka Y."/>
            <person name="Shaulsky G."/>
            <person name="Schleicher M."/>
            <person name="Weinstock G.M."/>
            <person name="Rosenthal A."/>
            <person name="Cox E.C."/>
            <person name="Chisholm R.L."/>
            <person name="Gibbs R.A."/>
            <person name="Loomis W.F."/>
            <person name="Platzer M."/>
            <person name="Kay R.R."/>
            <person name="Williams J.G."/>
            <person name="Dear P.H."/>
            <person name="Noegel A.A."/>
            <person name="Barrell B.G."/>
            <person name="Kuspa A."/>
        </authorList>
    </citation>
    <scope>NUCLEOTIDE SEQUENCE [LARGE SCALE GENOMIC DNA]</scope>
    <source>
        <strain>AX4</strain>
    </source>
</reference>
<dbReference type="EMBL" id="AAFI02000227">
    <property type="protein sequence ID" value="EAL60403.1"/>
    <property type="molecule type" value="Genomic_DNA"/>
</dbReference>
<dbReference type="RefSeq" id="XP_628816.1">
    <property type="nucleotide sequence ID" value="XM_628814.1"/>
</dbReference>
<dbReference type="EnsemblProtists" id="EAL60403">
    <property type="protein sequence ID" value="EAL60403"/>
    <property type="gene ID" value="DDB_G0294150"/>
</dbReference>
<dbReference type="GeneID" id="3385480"/>
<dbReference type="KEGG" id="ddi:DDB_G0294150"/>
<dbReference type="HOGENOM" id="CLU_221435_2_0_1"/>
<dbReference type="InParanoid" id="Q54AX0"/>
<dbReference type="Proteomes" id="UP000002195">
    <property type="component" value="Unassembled WGS sequence"/>
</dbReference>
<evidence type="ECO:0000305" key="1"/>
<proteinExistence type="uncertain"/>
<gene>
    <name type="ORF">DDB_G0294150</name>
</gene>
<feature type="chain" id="PRO_0000343928" description="Putative uncharacterized protein DDB_G0294150">
    <location>
        <begin position="1"/>
        <end position="12"/>
    </location>
</feature>
<protein>
    <recommendedName>
        <fullName>Putative uncharacterized protein DDB_G0294150</fullName>
    </recommendedName>
</protein>